<dbReference type="EC" id="7.1.1.-" evidence="1"/>
<dbReference type="EMBL" id="CP000903">
    <property type="protein sequence ID" value="ABY46237.1"/>
    <property type="molecule type" value="Genomic_DNA"/>
</dbReference>
<dbReference type="RefSeq" id="WP_000100081.1">
    <property type="nucleotide sequence ID" value="NZ_CAKMRX030000115.1"/>
</dbReference>
<dbReference type="SMR" id="A9VS91"/>
<dbReference type="GeneID" id="92886123"/>
<dbReference type="KEGG" id="bwe:BcerKBAB4_5091"/>
<dbReference type="eggNOG" id="COG0713">
    <property type="taxonomic scope" value="Bacteria"/>
</dbReference>
<dbReference type="HOGENOM" id="CLU_144724_0_0_9"/>
<dbReference type="Proteomes" id="UP000002154">
    <property type="component" value="Chromosome"/>
</dbReference>
<dbReference type="GO" id="GO:0030964">
    <property type="term" value="C:NADH dehydrogenase complex"/>
    <property type="evidence" value="ECO:0007669"/>
    <property type="project" value="TreeGrafter"/>
</dbReference>
<dbReference type="GO" id="GO:0005886">
    <property type="term" value="C:plasma membrane"/>
    <property type="evidence" value="ECO:0007669"/>
    <property type="project" value="UniProtKB-SubCell"/>
</dbReference>
<dbReference type="GO" id="GO:0050136">
    <property type="term" value="F:NADH:ubiquinone reductase (non-electrogenic) activity"/>
    <property type="evidence" value="ECO:0007669"/>
    <property type="project" value="UniProtKB-UniRule"/>
</dbReference>
<dbReference type="GO" id="GO:0048038">
    <property type="term" value="F:quinone binding"/>
    <property type="evidence" value="ECO:0007669"/>
    <property type="project" value="UniProtKB-KW"/>
</dbReference>
<dbReference type="GO" id="GO:0042773">
    <property type="term" value="P:ATP synthesis coupled electron transport"/>
    <property type="evidence" value="ECO:0007669"/>
    <property type="project" value="InterPro"/>
</dbReference>
<dbReference type="FunFam" id="1.10.287.3510:FF:000001">
    <property type="entry name" value="NADH-quinone oxidoreductase subunit K"/>
    <property type="match status" value="1"/>
</dbReference>
<dbReference type="Gene3D" id="1.10.287.3510">
    <property type="match status" value="1"/>
</dbReference>
<dbReference type="HAMAP" id="MF_01456">
    <property type="entry name" value="NDH1_NuoK"/>
    <property type="match status" value="1"/>
</dbReference>
<dbReference type="InterPro" id="IPR001133">
    <property type="entry name" value="NADH_UbQ_OxRdtase_chain4L/K"/>
</dbReference>
<dbReference type="InterPro" id="IPR039428">
    <property type="entry name" value="NUOK/Mnh_C1-like"/>
</dbReference>
<dbReference type="NCBIfam" id="NF004320">
    <property type="entry name" value="PRK05715.1-2"/>
    <property type="match status" value="1"/>
</dbReference>
<dbReference type="NCBIfam" id="NF004321">
    <property type="entry name" value="PRK05715.1-3"/>
    <property type="match status" value="1"/>
</dbReference>
<dbReference type="NCBIfam" id="NF004322">
    <property type="entry name" value="PRK05715.1-4"/>
    <property type="match status" value="1"/>
</dbReference>
<dbReference type="NCBIfam" id="NF004323">
    <property type="entry name" value="PRK05715.1-5"/>
    <property type="match status" value="1"/>
</dbReference>
<dbReference type="PANTHER" id="PTHR11434:SF16">
    <property type="entry name" value="NADH-UBIQUINONE OXIDOREDUCTASE CHAIN 4L"/>
    <property type="match status" value="1"/>
</dbReference>
<dbReference type="PANTHER" id="PTHR11434">
    <property type="entry name" value="NADH-UBIQUINONE OXIDOREDUCTASE SUBUNIT ND4L"/>
    <property type="match status" value="1"/>
</dbReference>
<dbReference type="Pfam" id="PF00420">
    <property type="entry name" value="Oxidored_q2"/>
    <property type="match status" value="1"/>
</dbReference>
<accession>A9VS91</accession>
<sequence length="104" mass="11072">MSSVPASAYLTLAIILFCIGLFGALTKRNTVIVLVCIELMLNAANLNLVAFSKLGLFPNLTGQIFSLFTMSVAAAEAAVGLAILIALYRNRPTVHVDEMDTLKG</sequence>
<organism>
    <name type="scientific">Bacillus mycoides (strain KBAB4)</name>
    <name type="common">Bacillus weihenstephanensis</name>
    <dbReference type="NCBI Taxonomy" id="315730"/>
    <lineage>
        <taxon>Bacteria</taxon>
        <taxon>Bacillati</taxon>
        <taxon>Bacillota</taxon>
        <taxon>Bacilli</taxon>
        <taxon>Bacillales</taxon>
        <taxon>Bacillaceae</taxon>
        <taxon>Bacillus</taxon>
        <taxon>Bacillus cereus group</taxon>
    </lineage>
</organism>
<reference key="1">
    <citation type="journal article" date="2008" name="Chem. Biol. Interact.">
        <title>Extending the Bacillus cereus group genomics to putative food-borne pathogens of different toxicity.</title>
        <authorList>
            <person name="Lapidus A."/>
            <person name="Goltsman E."/>
            <person name="Auger S."/>
            <person name="Galleron N."/>
            <person name="Segurens B."/>
            <person name="Dossat C."/>
            <person name="Land M.L."/>
            <person name="Broussolle V."/>
            <person name="Brillard J."/>
            <person name="Guinebretiere M.-H."/>
            <person name="Sanchis V."/>
            <person name="Nguen-the C."/>
            <person name="Lereclus D."/>
            <person name="Richardson P."/>
            <person name="Wincker P."/>
            <person name="Weissenbach J."/>
            <person name="Ehrlich S.D."/>
            <person name="Sorokin A."/>
        </authorList>
    </citation>
    <scope>NUCLEOTIDE SEQUENCE [LARGE SCALE GENOMIC DNA]</scope>
    <source>
        <strain>KBAB4</strain>
    </source>
</reference>
<keyword id="KW-1003">Cell membrane</keyword>
<keyword id="KW-0472">Membrane</keyword>
<keyword id="KW-0520">NAD</keyword>
<keyword id="KW-0874">Quinone</keyword>
<keyword id="KW-1278">Translocase</keyword>
<keyword id="KW-0812">Transmembrane</keyword>
<keyword id="KW-1133">Transmembrane helix</keyword>
<keyword id="KW-0813">Transport</keyword>
<protein>
    <recommendedName>
        <fullName evidence="1">NADH-quinone oxidoreductase subunit K</fullName>
        <ecNumber evidence="1">7.1.1.-</ecNumber>
    </recommendedName>
    <alternativeName>
        <fullName evidence="1">NADH dehydrogenase I subunit K</fullName>
    </alternativeName>
    <alternativeName>
        <fullName evidence="1">NDH-1 subunit K</fullName>
    </alternativeName>
</protein>
<gene>
    <name evidence="1" type="primary">nuoK</name>
    <name type="ordered locus">BcerKBAB4_5091</name>
</gene>
<name>NUOK_BACMK</name>
<evidence type="ECO:0000255" key="1">
    <source>
        <dbReference type="HAMAP-Rule" id="MF_01456"/>
    </source>
</evidence>
<comment type="function">
    <text evidence="1">NDH-1 shuttles electrons from NADH, via FMN and iron-sulfur (Fe-S) centers, to quinones in the respiratory chain. The immediate electron acceptor for the enzyme in this species is believed to be a menaquinone. Couples the redox reaction to proton translocation (for every two electrons transferred, four hydrogen ions are translocated across the cytoplasmic membrane), and thus conserves the redox energy in a proton gradient.</text>
</comment>
<comment type="catalytic activity">
    <reaction evidence="1">
        <text>a quinone + NADH + 5 H(+)(in) = a quinol + NAD(+) + 4 H(+)(out)</text>
        <dbReference type="Rhea" id="RHEA:57888"/>
        <dbReference type="ChEBI" id="CHEBI:15378"/>
        <dbReference type="ChEBI" id="CHEBI:24646"/>
        <dbReference type="ChEBI" id="CHEBI:57540"/>
        <dbReference type="ChEBI" id="CHEBI:57945"/>
        <dbReference type="ChEBI" id="CHEBI:132124"/>
    </reaction>
</comment>
<comment type="subunit">
    <text evidence="1">NDH-1 is composed of 14 different subunits. Subunits NuoA, H, J, K, L, M, N constitute the membrane sector of the complex.</text>
</comment>
<comment type="subcellular location">
    <subcellularLocation>
        <location evidence="1">Cell membrane</location>
        <topology evidence="1">Multi-pass membrane protein</topology>
    </subcellularLocation>
</comment>
<comment type="similarity">
    <text evidence="1">Belongs to the complex I subunit 4L family.</text>
</comment>
<proteinExistence type="inferred from homology"/>
<feature type="chain" id="PRO_0000389950" description="NADH-quinone oxidoreductase subunit K">
    <location>
        <begin position="1"/>
        <end position="104"/>
    </location>
</feature>
<feature type="transmembrane region" description="Helical" evidence="1">
    <location>
        <begin position="4"/>
        <end position="24"/>
    </location>
</feature>
<feature type="transmembrane region" description="Helical" evidence="1">
    <location>
        <begin position="31"/>
        <end position="51"/>
    </location>
</feature>
<feature type="transmembrane region" description="Helical" evidence="1">
    <location>
        <begin position="67"/>
        <end position="87"/>
    </location>
</feature>